<organism>
    <name type="scientific">Yersinia pseudotuberculosis serotype O:1b (strain IP 31758)</name>
    <dbReference type="NCBI Taxonomy" id="349747"/>
    <lineage>
        <taxon>Bacteria</taxon>
        <taxon>Pseudomonadati</taxon>
        <taxon>Pseudomonadota</taxon>
        <taxon>Gammaproteobacteria</taxon>
        <taxon>Enterobacterales</taxon>
        <taxon>Yersiniaceae</taxon>
        <taxon>Yersinia</taxon>
    </lineage>
</organism>
<feature type="chain" id="PRO_1000060985" description="ATP synthase epsilon chain">
    <location>
        <begin position="1"/>
        <end position="140"/>
    </location>
</feature>
<accession>A7FPD9</accession>
<protein>
    <recommendedName>
        <fullName evidence="1">ATP synthase epsilon chain</fullName>
    </recommendedName>
    <alternativeName>
        <fullName evidence="1">ATP synthase F1 sector epsilon subunit</fullName>
    </alternativeName>
    <alternativeName>
        <fullName evidence="1">F-ATPase epsilon subunit</fullName>
    </alternativeName>
</protein>
<evidence type="ECO:0000255" key="1">
    <source>
        <dbReference type="HAMAP-Rule" id="MF_00530"/>
    </source>
</evidence>
<proteinExistence type="inferred from homology"/>
<gene>
    <name evidence="1" type="primary">atpC</name>
    <name type="ordered locus">YpsIP31758_4175</name>
</gene>
<reference key="1">
    <citation type="journal article" date="2007" name="PLoS Genet.">
        <title>The complete genome sequence of Yersinia pseudotuberculosis IP31758, the causative agent of Far East scarlet-like fever.</title>
        <authorList>
            <person name="Eppinger M."/>
            <person name="Rosovitz M.J."/>
            <person name="Fricke W.F."/>
            <person name="Rasko D.A."/>
            <person name="Kokorina G."/>
            <person name="Fayolle C."/>
            <person name="Lindler L.E."/>
            <person name="Carniel E."/>
            <person name="Ravel J."/>
        </authorList>
    </citation>
    <scope>NUCLEOTIDE SEQUENCE [LARGE SCALE GENOMIC DNA]</scope>
    <source>
        <strain>IP 31758</strain>
    </source>
</reference>
<dbReference type="EMBL" id="CP000720">
    <property type="protein sequence ID" value="ABS47682.1"/>
    <property type="molecule type" value="Genomic_DNA"/>
</dbReference>
<dbReference type="RefSeq" id="WP_002215546.1">
    <property type="nucleotide sequence ID" value="NC_009708.1"/>
</dbReference>
<dbReference type="SMR" id="A7FPD9"/>
<dbReference type="KEGG" id="ypi:YpsIP31758_4175"/>
<dbReference type="HOGENOM" id="CLU_084338_2_0_6"/>
<dbReference type="Proteomes" id="UP000002412">
    <property type="component" value="Chromosome"/>
</dbReference>
<dbReference type="GO" id="GO:0005886">
    <property type="term" value="C:plasma membrane"/>
    <property type="evidence" value="ECO:0007669"/>
    <property type="project" value="UniProtKB-SubCell"/>
</dbReference>
<dbReference type="GO" id="GO:0045259">
    <property type="term" value="C:proton-transporting ATP synthase complex"/>
    <property type="evidence" value="ECO:0007669"/>
    <property type="project" value="UniProtKB-KW"/>
</dbReference>
<dbReference type="GO" id="GO:0005524">
    <property type="term" value="F:ATP binding"/>
    <property type="evidence" value="ECO:0007669"/>
    <property type="project" value="UniProtKB-UniRule"/>
</dbReference>
<dbReference type="GO" id="GO:0046933">
    <property type="term" value="F:proton-transporting ATP synthase activity, rotational mechanism"/>
    <property type="evidence" value="ECO:0007669"/>
    <property type="project" value="UniProtKB-UniRule"/>
</dbReference>
<dbReference type="CDD" id="cd12152">
    <property type="entry name" value="F1-ATPase_delta"/>
    <property type="match status" value="1"/>
</dbReference>
<dbReference type="FunFam" id="1.20.5.440:FF:000001">
    <property type="entry name" value="ATP synthase epsilon chain"/>
    <property type="match status" value="1"/>
</dbReference>
<dbReference type="FunFam" id="2.60.15.10:FF:000001">
    <property type="entry name" value="ATP synthase epsilon chain"/>
    <property type="match status" value="1"/>
</dbReference>
<dbReference type="Gene3D" id="1.20.5.440">
    <property type="entry name" value="ATP synthase delta/epsilon subunit, C-terminal domain"/>
    <property type="match status" value="1"/>
</dbReference>
<dbReference type="Gene3D" id="2.60.15.10">
    <property type="entry name" value="F0F1 ATP synthase delta/epsilon subunit, N-terminal"/>
    <property type="match status" value="1"/>
</dbReference>
<dbReference type="HAMAP" id="MF_00530">
    <property type="entry name" value="ATP_synth_epsil_bac"/>
    <property type="match status" value="1"/>
</dbReference>
<dbReference type="InterPro" id="IPR036794">
    <property type="entry name" value="ATP_F1_dsu/esu_C_sf"/>
</dbReference>
<dbReference type="InterPro" id="IPR001469">
    <property type="entry name" value="ATP_synth_F1_dsu/esu"/>
</dbReference>
<dbReference type="InterPro" id="IPR020546">
    <property type="entry name" value="ATP_synth_F1_dsu/esu_N"/>
</dbReference>
<dbReference type="InterPro" id="IPR020547">
    <property type="entry name" value="ATP_synth_F1_esu_C"/>
</dbReference>
<dbReference type="InterPro" id="IPR036771">
    <property type="entry name" value="ATPsynth_dsu/esu_N"/>
</dbReference>
<dbReference type="NCBIfam" id="TIGR01216">
    <property type="entry name" value="ATP_synt_epsi"/>
    <property type="match status" value="1"/>
</dbReference>
<dbReference type="NCBIfam" id="NF001847">
    <property type="entry name" value="PRK00571.1-4"/>
    <property type="match status" value="1"/>
</dbReference>
<dbReference type="PANTHER" id="PTHR13822">
    <property type="entry name" value="ATP SYNTHASE DELTA/EPSILON CHAIN"/>
    <property type="match status" value="1"/>
</dbReference>
<dbReference type="PANTHER" id="PTHR13822:SF10">
    <property type="entry name" value="ATP SYNTHASE EPSILON CHAIN, CHLOROPLASTIC"/>
    <property type="match status" value="1"/>
</dbReference>
<dbReference type="Pfam" id="PF00401">
    <property type="entry name" value="ATP-synt_DE"/>
    <property type="match status" value="1"/>
</dbReference>
<dbReference type="Pfam" id="PF02823">
    <property type="entry name" value="ATP-synt_DE_N"/>
    <property type="match status" value="1"/>
</dbReference>
<dbReference type="SUPFAM" id="SSF46604">
    <property type="entry name" value="Epsilon subunit of F1F0-ATP synthase C-terminal domain"/>
    <property type="match status" value="1"/>
</dbReference>
<dbReference type="SUPFAM" id="SSF51344">
    <property type="entry name" value="Epsilon subunit of F1F0-ATP synthase N-terminal domain"/>
    <property type="match status" value="1"/>
</dbReference>
<sequence>MAAMTYHLDVVSAEKKMFSGVVQKIQVTGSEGELGIFPGHAPLLTAIKPGMIRIVKQFGEEEFIYLSGGILEVQPSVVIVLADTAIRGLDLDEARALESKRKAEAHINNSHGDVDYAQASAELAKAIAKLRVIELTKKAM</sequence>
<keyword id="KW-0066">ATP synthesis</keyword>
<keyword id="KW-0997">Cell inner membrane</keyword>
<keyword id="KW-1003">Cell membrane</keyword>
<keyword id="KW-0139">CF(1)</keyword>
<keyword id="KW-0375">Hydrogen ion transport</keyword>
<keyword id="KW-0406">Ion transport</keyword>
<keyword id="KW-0472">Membrane</keyword>
<keyword id="KW-0813">Transport</keyword>
<comment type="function">
    <text evidence="1">Produces ATP from ADP in the presence of a proton gradient across the membrane.</text>
</comment>
<comment type="subunit">
    <text evidence="1">F-type ATPases have 2 components, CF(1) - the catalytic core - and CF(0) - the membrane proton channel. CF(1) has five subunits: alpha(3), beta(3), gamma(1), delta(1), epsilon(1). CF(0) has three main subunits: a, b and c.</text>
</comment>
<comment type="subcellular location">
    <subcellularLocation>
        <location evidence="1">Cell inner membrane</location>
        <topology evidence="1">Peripheral membrane protein</topology>
    </subcellularLocation>
</comment>
<comment type="similarity">
    <text evidence="1">Belongs to the ATPase epsilon chain family.</text>
</comment>
<name>ATPE_YERP3</name>